<organism>
    <name type="scientific">Synechocystis sp. (strain ATCC 27184 / PCC 6803 / Kazusa)</name>
    <dbReference type="NCBI Taxonomy" id="1111708"/>
    <lineage>
        <taxon>Bacteria</taxon>
        <taxon>Bacillati</taxon>
        <taxon>Cyanobacteriota</taxon>
        <taxon>Cyanophyceae</taxon>
        <taxon>Synechococcales</taxon>
        <taxon>Merismopediaceae</taxon>
        <taxon>Synechocystis</taxon>
    </lineage>
</organism>
<accession>Q55422</accession>
<sequence length="341" mass="36164">MDYRQAGVDVEAGREFVSRIRQQVESTFRPEVMGGIGGFAGLFEIPAGYKAPVLVSGTDGVGTKLKIAQAMDQHHTIGIDLVAMCVNDILTTGAEPLYFLDYLATGKLEPAQLADVVTGIVEGCKQSGCALLGGETAEMPGFYGAGEYDAAGFAVGIVEKSQLLNGSQVNIGDVAIAVESSGVHSNGFSLVRKIIESNGWQWSDCLPEWGGQSLGEIFLEPTRIYVKPIQALLKSGINIHGMAHITGGGLPENLPRCLGQGQSIQVKAGSWQPLPVFNWLADKGQVNSTAMLETFNLGVGFVVLVSPEQRQTTLDFFSGQGLVANQIGTVIEGDGAFVWLD</sequence>
<evidence type="ECO:0000255" key="1">
    <source>
        <dbReference type="HAMAP-Rule" id="MF_00741"/>
    </source>
</evidence>
<keyword id="KW-0067">ATP-binding</keyword>
<keyword id="KW-0963">Cytoplasm</keyword>
<keyword id="KW-0436">Ligase</keyword>
<keyword id="KW-0547">Nucleotide-binding</keyword>
<keyword id="KW-0658">Purine biosynthesis</keyword>
<keyword id="KW-1185">Reference proteome</keyword>
<dbReference type="EC" id="6.3.3.1" evidence="1"/>
<dbReference type="EMBL" id="BA000022">
    <property type="protein sequence ID" value="BAA10521.1"/>
    <property type="molecule type" value="Genomic_DNA"/>
</dbReference>
<dbReference type="PIR" id="S75786">
    <property type="entry name" value="S75786"/>
</dbReference>
<dbReference type="SMR" id="Q55422"/>
<dbReference type="FunCoup" id="Q55422">
    <property type="interactions" value="449"/>
</dbReference>
<dbReference type="IntAct" id="Q55422">
    <property type="interactions" value="2"/>
</dbReference>
<dbReference type="STRING" id="1148.gene:10500025"/>
<dbReference type="PaxDb" id="1148-1001275"/>
<dbReference type="EnsemblBacteria" id="BAA10521">
    <property type="protein sequence ID" value="BAA10521"/>
    <property type="gene ID" value="BAA10521"/>
</dbReference>
<dbReference type="KEGG" id="syn:slr0838"/>
<dbReference type="eggNOG" id="COG0150">
    <property type="taxonomic scope" value="Bacteria"/>
</dbReference>
<dbReference type="InParanoid" id="Q55422"/>
<dbReference type="PhylomeDB" id="Q55422"/>
<dbReference type="UniPathway" id="UPA00074">
    <property type="reaction ID" value="UER00129"/>
</dbReference>
<dbReference type="Proteomes" id="UP000001425">
    <property type="component" value="Chromosome"/>
</dbReference>
<dbReference type="GO" id="GO:0005829">
    <property type="term" value="C:cytosol"/>
    <property type="evidence" value="ECO:0000318"/>
    <property type="project" value="GO_Central"/>
</dbReference>
<dbReference type="GO" id="GO:0005524">
    <property type="term" value="F:ATP binding"/>
    <property type="evidence" value="ECO:0007669"/>
    <property type="project" value="UniProtKB-KW"/>
</dbReference>
<dbReference type="GO" id="GO:0004637">
    <property type="term" value="F:phosphoribosylamine-glycine ligase activity"/>
    <property type="evidence" value="ECO:0000318"/>
    <property type="project" value="GO_Central"/>
</dbReference>
<dbReference type="GO" id="GO:0004641">
    <property type="term" value="F:phosphoribosylformylglycinamidine cyclo-ligase activity"/>
    <property type="evidence" value="ECO:0000318"/>
    <property type="project" value="GO_Central"/>
</dbReference>
<dbReference type="GO" id="GO:0006189">
    <property type="term" value="P:'de novo' IMP biosynthetic process"/>
    <property type="evidence" value="ECO:0007669"/>
    <property type="project" value="UniProtKB-UniRule"/>
</dbReference>
<dbReference type="GO" id="GO:0046084">
    <property type="term" value="P:adenine biosynthetic process"/>
    <property type="evidence" value="ECO:0000318"/>
    <property type="project" value="GO_Central"/>
</dbReference>
<dbReference type="GO" id="GO:0006164">
    <property type="term" value="P:purine nucleotide biosynthetic process"/>
    <property type="evidence" value="ECO:0000318"/>
    <property type="project" value="GO_Central"/>
</dbReference>
<dbReference type="CDD" id="cd02196">
    <property type="entry name" value="PurM"/>
    <property type="match status" value="1"/>
</dbReference>
<dbReference type="FunFam" id="3.30.1330.10:FF:000001">
    <property type="entry name" value="Phosphoribosylformylglycinamidine cyclo-ligase"/>
    <property type="match status" value="1"/>
</dbReference>
<dbReference type="FunFam" id="3.90.650.10:FF:000011">
    <property type="entry name" value="Phosphoribosylformylglycinamidine cyclo-ligase"/>
    <property type="match status" value="1"/>
</dbReference>
<dbReference type="Gene3D" id="3.90.650.10">
    <property type="entry name" value="PurM-like C-terminal domain"/>
    <property type="match status" value="1"/>
</dbReference>
<dbReference type="Gene3D" id="3.30.1330.10">
    <property type="entry name" value="PurM-like, N-terminal domain"/>
    <property type="match status" value="1"/>
</dbReference>
<dbReference type="HAMAP" id="MF_00741">
    <property type="entry name" value="AIRS"/>
    <property type="match status" value="1"/>
</dbReference>
<dbReference type="InterPro" id="IPR010918">
    <property type="entry name" value="PurM-like_C_dom"/>
</dbReference>
<dbReference type="InterPro" id="IPR036676">
    <property type="entry name" value="PurM-like_C_sf"/>
</dbReference>
<dbReference type="InterPro" id="IPR016188">
    <property type="entry name" value="PurM-like_N"/>
</dbReference>
<dbReference type="InterPro" id="IPR036921">
    <property type="entry name" value="PurM-like_N_sf"/>
</dbReference>
<dbReference type="InterPro" id="IPR004733">
    <property type="entry name" value="PurM_cligase"/>
</dbReference>
<dbReference type="NCBIfam" id="TIGR00878">
    <property type="entry name" value="purM"/>
    <property type="match status" value="1"/>
</dbReference>
<dbReference type="PANTHER" id="PTHR10520:SF12">
    <property type="entry name" value="TRIFUNCTIONAL PURINE BIOSYNTHETIC PROTEIN ADENOSINE-3"/>
    <property type="match status" value="1"/>
</dbReference>
<dbReference type="PANTHER" id="PTHR10520">
    <property type="entry name" value="TRIFUNCTIONAL PURINE BIOSYNTHETIC PROTEIN ADENOSINE-3-RELATED"/>
    <property type="match status" value="1"/>
</dbReference>
<dbReference type="Pfam" id="PF00586">
    <property type="entry name" value="AIRS"/>
    <property type="match status" value="1"/>
</dbReference>
<dbReference type="Pfam" id="PF02769">
    <property type="entry name" value="AIRS_C"/>
    <property type="match status" value="1"/>
</dbReference>
<dbReference type="SUPFAM" id="SSF56042">
    <property type="entry name" value="PurM C-terminal domain-like"/>
    <property type="match status" value="1"/>
</dbReference>
<dbReference type="SUPFAM" id="SSF55326">
    <property type="entry name" value="PurM N-terminal domain-like"/>
    <property type="match status" value="1"/>
</dbReference>
<reference key="1">
    <citation type="journal article" date="1995" name="DNA Res.">
        <title>Sequence analysis of the genome of the unicellular cyanobacterium Synechocystis sp. strain PCC6803. I. Sequence features in the 1 Mb region from map positions 64% to 92% of the genome.</title>
        <authorList>
            <person name="Kaneko T."/>
            <person name="Tanaka A."/>
            <person name="Sato S."/>
            <person name="Kotani H."/>
            <person name="Sazuka T."/>
            <person name="Miyajima N."/>
            <person name="Sugiura M."/>
            <person name="Tabata S."/>
        </authorList>
    </citation>
    <scope>NUCLEOTIDE SEQUENCE [LARGE SCALE GENOMIC DNA]</scope>
    <source>
        <strain>ATCC 27184 / PCC 6803 / N-1</strain>
    </source>
</reference>
<reference key="2">
    <citation type="journal article" date="1996" name="DNA Res.">
        <title>Sequence analysis of the genome of the unicellular cyanobacterium Synechocystis sp. strain PCC6803. II. Sequence determination of the entire genome and assignment of potential protein-coding regions.</title>
        <authorList>
            <person name="Kaneko T."/>
            <person name="Sato S."/>
            <person name="Kotani H."/>
            <person name="Tanaka A."/>
            <person name="Asamizu E."/>
            <person name="Nakamura Y."/>
            <person name="Miyajima N."/>
            <person name="Hirosawa M."/>
            <person name="Sugiura M."/>
            <person name="Sasamoto S."/>
            <person name="Kimura T."/>
            <person name="Hosouchi T."/>
            <person name="Matsuno A."/>
            <person name="Muraki A."/>
            <person name="Nakazaki N."/>
            <person name="Naruo K."/>
            <person name="Okumura S."/>
            <person name="Shimpo S."/>
            <person name="Takeuchi C."/>
            <person name="Wada T."/>
            <person name="Watanabe A."/>
            <person name="Yamada M."/>
            <person name="Yasuda M."/>
            <person name="Tabata S."/>
        </authorList>
    </citation>
    <scope>NUCLEOTIDE SEQUENCE [LARGE SCALE GENOMIC DNA]</scope>
    <source>
        <strain>ATCC 27184 / PCC 6803 / Kazusa</strain>
    </source>
</reference>
<name>PUR5_SYNY3</name>
<feature type="chain" id="PRO_0000148268" description="Phosphoribosylformylglycinamidine cyclo-ligase">
    <location>
        <begin position="1"/>
        <end position="341"/>
    </location>
</feature>
<gene>
    <name evidence="1" type="primary">purM</name>
    <name type="ordered locus">slr0838</name>
</gene>
<protein>
    <recommendedName>
        <fullName evidence="1">Phosphoribosylformylglycinamidine cyclo-ligase</fullName>
        <ecNumber evidence="1">6.3.3.1</ecNumber>
    </recommendedName>
    <alternativeName>
        <fullName evidence="1">AIR synthase</fullName>
    </alternativeName>
    <alternativeName>
        <fullName evidence="1">AIRS</fullName>
    </alternativeName>
    <alternativeName>
        <fullName evidence="1">Phosphoribosyl-aminoimidazole synthetase</fullName>
    </alternativeName>
</protein>
<comment type="catalytic activity">
    <reaction evidence="1">
        <text>2-formamido-N(1)-(5-O-phospho-beta-D-ribosyl)acetamidine + ATP = 5-amino-1-(5-phospho-beta-D-ribosyl)imidazole + ADP + phosphate + H(+)</text>
        <dbReference type="Rhea" id="RHEA:23032"/>
        <dbReference type="ChEBI" id="CHEBI:15378"/>
        <dbReference type="ChEBI" id="CHEBI:30616"/>
        <dbReference type="ChEBI" id="CHEBI:43474"/>
        <dbReference type="ChEBI" id="CHEBI:137981"/>
        <dbReference type="ChEBI" id="CHEBI:147287"/>
        <dbReference type="ChEBI" id="CHEBI:456216"/>
        <dbReference type="EC" id="6.3.3.1"/>
    </reaction>
</comment>
<comment type="pathway">
    <text evidence="1">Purine metabolism; IMP biosynthesis via de novo pathway; 5-amino-1-(5-phospho-D-ribosyl)imidazole from N(2)-formyl-N(1)-(5-phospho-D-ribosyl)glycinamide: step 2/2.</text>
</comment>
<comment type="subcellular location">
    <subcellularLocation>
        <location evidence="1">Cytoplasm</location>
    </subcellularLocation>
</comment>
<comment type="similarity">
    <text evidence="1">Belongs to the AIR synthase family.</text>
</comment>
<proteinExistence type="inferred from homology"/>